<evidence type="ECO:0000255" key="1">
    <source>
        <dbReference type="HAMAP-Rule" id="MF_00537"/>
    </source>
</evidence>
<evidence type="ECO:0000305" key="2"/>
<accession>B1Z780</accession>
<keyword id="KW-0687">Ribonucleoprotein</keyword>
<keyword id="KW-0689">Ribosomal protein</keyword>
<keyword id="KW-0694">RNA-binding</keyword>
<keyword id="KW-0699">rRNA-binding</keyword>
<gene>
    <name evidence="1" type="primary">rpsN</name>
    <name type="ordered locus">Mpop_2151</name>
</gene>
<feature type="chain" id="PRO_1000128447" description="Small ribosomal subunit protein uS14">
    <location>
        <begin position="1"/>
        <end position="101"/>
    </location>
</feature>
<proteinExistence type="inferred from homology"/>
<protein>
    <recommendedName>
        <fullName evidence="1">Small ribosomal subunit protein uS14</fullName>
    </recommendedName>
    <alternativeName>
        <fullName evidence="2">30S ribosomal protein S14</fullName>
    </alternativeName>
</protein>
<organism>
    <name type="scientific">Methylorubrum populi (strain ATCC BAA-705 / NCIMB 13946 / BJ001)</name>
    <name type="common">Methylobacterium populi</name>
    <dbReference type="NCBI Taxonomy" id="441620"/>
    <lineage>
        <taxon>Bacteria</taxon>
        <taxon>Pseudomonadati</taxon>
        <taxon>Pseudomonadota</taxon>
        <taxon>Alphaproteobacteria</taxon>
        <taxon>Hyphomicrobiales</taxon>
        <taxon>Methylobacteriaceae</taxon>
        <taxon>Methylorubrum</taxon>
    </lineage>
</organism>
<name>RS14_METPB</name>
<comment type="function">
    <text evidence="1">Binds 16S rRNA, required for the assembly of 30S particles and may also be responsible for determining the conformation of the 16S rRNA at the A site.</text>
</comment>
<comment type="subunit">
    <text evidence="1">Part of the 30S ribosomal subunit. Contacts proteins S3 and S10.</text>
</comment>
<comment type="similarity">
    <text evidence="1">Belongs to the universal ribosomal protein uS14 family.</text>
</comment>
<dbReference type="EMBL" id="CP001029">
    <property type="protein sequence ID" value="ACB80313.1"/>
    <property type="molecule type" value="Genomic_DNA"/>
</dbReference>
<dbReference type="RefSeq" id="WP_012454048.1">
    <property type="nucleotide sequence ID" value="NC_010725.1"/>
</dbReference>
<dbReference type="SMR" id="B1Z780"/>
<dbReference type="STRING" id="441620.Mpop_2151"/>
<dbReference type="KEGG" id="mpo:Mpop_2151"/>
<dbReference type="eggNOG" id="COG0199">
    <property type="taxonomic scope" value="Bacteria"/>
</dbReference>
<dbReference type="HOGENOM" id="CLU_139869_0_1_5"/>
<dbReference type="OrthoDB" id="9810484at2"/>
<dbReference type="Proteomes" id="UP000007136">
    <property type="component" value="Chromosome"/>
</dbReference>
<dbReference type="GO" id="GO:0005737">
    <property type="term" value="C:cytoplasm"/>
    <property type="evidence" value="ECO:0007669"/>
    <property type="project" value="UniProtKB-ARBA"/>
</dbReference>
<dbReference type="GO" id="GO:0015935">
    <property type="term" value="C:small ribosomal subunit"/>
    <property type="evidence" value="ECO:0007669"/>
    <property type="project" value="TreeGrafter"/>
</dbReference>
<dbReference type="GO" id="GO:0019843">
    <property type="term" value="F:rRNA binding"/>
    <property type="evidence" value="ECO:0007669"/>
    <property type="project" value="UniProtKB-UniRule"/>
</dbReference>
<dbReference type="GO" id="GO:0003735">
    <property type="term" value="F:structural constituent of ribosome"/>
    <property type="evidence" value="ECO:0007669"/>
    <property type="project" value="InterPro"/>
</dbReference>
<dbReference type="GO" id="GO:0006412">
    <property type="term" value="P:translation"/>
    <property type="evidence" value="ECO:0007669"/>
    <property type="project" value="UniProtKB-UniRule"/>
</dbReference>
<dbReference type="FunFam" id="1.10.287.1480:FF:000001">
    <property type="entry name" value="30S ribosomal protein S14"/>
    <property type="match status" value="1"/>
</dbReference>
<dbReference type="Gene3D" id="1.10.287.1480">
    <property type="match status" value="1"/>
</dbReference>
<dbReference type="HAMAP" id="MF_00537">
    <property type="entry name" value="Ribosomal_uS14_1"/>
    <property type="match status" value="1"/>
</dbReference>
<dbReference type="InterPro" id="IPR001209">
    <property type="entry name" value="Ribosomal_uS14"/>
</dbReference>
<dbReference type="InterPro" id="IPR023036">
    <property type="entry name" value="Ribosomal_uS14_bac/plastid"/>
</dbReference>
<dbReference type="InterPro" id="IPR018271">
    <property type="entry name" value="Ribosomal_uS14_CS"/>
</dbReference>
<dbReference type="NCBIfam" id="NF006477">
    <property type="entry name" value="PRK08881.1"/>
    <property type="match status" value="1"/>
</dbReference>
<dbReference type="PANTHER" id="PTHR19836">
    <property type="entry name" value="30S RIBOSOMAL PROTEIN S14"/>
    <property type="match status" value="1"/>
</dbReference>
<dbReference type="PANTHER" id="PTHR19836:SF19">
    <property type="entry name" value="SMALL RIBOSOMAL SUBUNIT PROTEIN US14M"/>
    <property type="match status" value="1"/>
</dbReference>
<dbReference type="Pfam" id="PF00253">
    <property type="entry name" value="Ribosomal_S14"/>
    <property type="match status" value="1"/>
</dbReference>
<dbReference type="SUPFAM" id="SSF57716">
    <property type="entry name" value="Glucocorticoid receptor-like (DNA-binding domain)"/>
    <property type="match status" value="1"/>
</dbReference>
<dbReference type="PROSITE" id="PS00527">
    <property type="entry name" value="RIBOSOMAL_S14"/>
    <property type="match status" value="1"/>
</dbReference>
<sequence length="101" mass="11740">MAKKSSVEKNNHRKELVKRFAEKRKALLAIANDESREMEERFEARLKLAELPRNSSATRIRNRCEMTGRPRAYYRKLGISRVALRELGNRGLIPGLVKSSW</sequence>
<reference key="1">
    <citation type="submission" date="2008-04" db="EMBL/GenBank/DDBJ databases">
        <title>Complete sequence of chromosome of Methylobacterium populi BJ001.</title>
        <authorList>
            <consortium name="US DOE Joint Genome Institute"/>
            <person name="Copeland A."/>
            <person name="Lucas S."/>
            <person name="Lapidus A."/>
            <person name="Glavina del Rio T."/>
            <person name="Dalin E."/>
            <person name="Tice H."/>
            <person name="Bruce D."/>
            <person name="Goodwin L."/>
            <person name="Pitluck S."/>
            <person name="Chertkov O."/>
            <person name="Brettin T."/>
            <person name="Detter J.C."/>
            <person name="Han C."/>
            <person name="Kuske C.R."/>
            <person name="Schmutz J."/>
            <person name="Larimer F."/>
            <person name="Land M."/>
            <person name="Hauser L."/>
            <person name="Kyrpides N."/>
            <person name="Mikhailova N."/>
            <person name="Marx C."/>
            <person name="Richardson P."/>
        </authorList>
    </citation>
    <scope>NUCLEOTIDE SEQUENCE [LARGE SCALE GENOMIC DNA]</scope>
    <source>
        <strain>ATCC BAA-705 / NCIMB 13946 / BJ001</strain>
    </source>
</reference>